<dbReference type="EC" id="1.1.1.103" evidence="1"/>
<dbReference type="EMBL" id="CP000821">
    <property type="protein sequence ID" value="ABV34713.1"/>
    <property type="molecule type" value="Genomic_DNA"/>
</dbReference>
<dbReference type="RefSeq" id="WP_012004239.1">
    <property type="nucleotide sequence ID" value="NC_009831.1"/>
</dbReference>
<dbReference type="SMR" id="A8FPE0"/>
<dbReference type="STRING" id="425104.Ssed_0100"/>
<dbReference type="KEGG" id="sse:Ssed_0100"/>
<dbReference type="eggNOG" id="COG1063">
    <property type="taxonomic scope" value="Bacteria"/>
</dbReference>
<dbReference type="HOGENOM" id="CLU_026673_11_0_6"/>
<dbReference type="OrthoDB" id="9773078at2"/>
<dbReference type="UniPathway" id="UPA00046">
    <property type="reaction ID" value="UER00505"/>
</dbReference>
<dbReference type="Proteomes" id="UP000002015">
    <property type="component" value="Chromosome"/>
</dbReference>
<dbReference type="GO" id="GO:0005737">
    <property type="term" value="C:cytoplasm"/>
    <property type="evidence" value="ECO:0007669"/>
    <property type="project" value="UniProtKB-SubCell"/>
</dbReference>
<dbReference type="GO" id="GO:0008743">
    <property type="term" value="F:L-threonine 3-dehydrogenase activity"/>
    <property type="evidence" value="ECO:0007669"/>
    <property type="project" value="UniProtKB-UniRule"/>
</dbReference>
<dbReference type="GO" id="GO:0008270">
    <property type="term" value="F:zinc ion binding"/>
    <property type="evidence" value="ECO:0007669"/>
    <property type="project" value="UniProtKB-UniRule"/>
</dbReference>
<dbReference type="GO" id="GO:0019518">
    <property type="term" value="P:L-threonine catabolic process to glycine"/>
    <property type="evidence" value="ECO:0007669"/>
    <property type="project" value="UniProtKB-UniPathway"/>
</dbReference>
<dbReference type="Gene3D" id="3.90.180.10">
    <property type="entry name" value="Medium-chain alcohol dehydrogenases, catalytic domain"/>
    <property type="match status" value="1"/>
</dbReference>
<dbReference type="Gene3D" id="3.40.50.720">
    <property type="entry name" value="NAD(P)-binding Rossmann-like Domain"/>
    <property type="match status" value="1"/>
</dbReference>
<dbReference type="HAMAP" id="MF_00627">
    <property type="entry name" value="Thr_dehydrog"/>
    <property type="match status" value="1"/>
</dbReference>
<dbReference type="InterPro" id="IPR013149">
    <property type="entry name" value="ADH-like_C"/>
</dbReference>
<dbReference type="InterPro" id="IPR013154">
    <property type="entry name" value="ADH-like_N"/>
</dbReference>
<dbReference type="InterPro" id="IPR002328">
    <property type="entry name" value="ADH_Zn_CS"/>
</dbReference>
<dbReference type="InterPro" id="IPR011032">
    <property type="entry name" value="GroES-like_sf"/>
</dbReference>
<dbReference type="InterPro" id="IPR004627">
    <property type="entry name" value="L-Threonine_3-DHase"/>
</dbReference>
<dbReference type="InterPro" id="IPR036291">
    <property type="entry name" value="NAD(P)-bd_dom_sf"/>
</dbReference>
<dbReference type="InterPro" id="IPR020843">
    <property type="entry name" value="PKS_ER"/>
</dbReference>
<dbReference type="InterPro" id="IPR050129">
    <property type="entry name" value="Zn_alcohol_dh"/>
</dbReference>
<dbReference type="NCBIfam" id="NF003808">
    <property type="entry name" value="PRK05396.1"/>
    <property type="match status" value="1"/>
</dbReference>
<dbReference type="NCBIfam" id="TIGR00692">
    <property type="entry name" value="tdh"/>
    <property type="match status" value="1"/>
</dbReference>
<dbReference type="PANTHER" id="PTHR43401">
    <property type="entry name" value="L-THREONINE 3-DEHYDROGENASE"/>
    <property type="match status" value="1"/>
</dbReference>
<dbReference type="PANTHER" id="PTHR43401:SF2">
    <property type="entry name" value="L-THREONINE 3-DEHYDROGENASE"/>
    <property type="match status" value="1"/>
</dbReference>
<dbReference type="Pfam" id="PF08240">
    <property type="entry name" value="ADH_N"/>
    <property type="match status" value="1"/>
</dbReference>
<dbReference type="Pfam" id="PF00107">
    <property type="entry name" value="ADH_zinc_N"/>
    <property type="match status" value="1"/>
</dbReference>
<dbReference type="SMART" id="SM00829">
    <property type="entry name" value="PKS_ER"/>
    <property type="match status" value="1"/>
</dbReference>
<dbReference type="SUPFAM" id="SSF50129">
    <property type="entry name" value="GroES-like"/>
    <property type="match status" value="1"/>
</dbReference>
<dbReference type="SUPFAM" id="SSF51735">
    <property type="entry name" value="NAD(P)-binding Rossmann-fold domains"/>
    <property type="match status" value="1"/>
</dbReference>
<dbReference type="PROSITE" id="PS00059">
    <property type="entry name" value="ADH_ZINC"/>
    <property type="match status" value="1"/>
</dbReference>
<proteinExistence type="inferred from homology"/>
<gene>
    <name evidence="1" type="primary">tdh</name>
    <name type="ordered locus">Ssed_0100</name>
</gene>
<reference key="1">
    <citation type="submission" date="2007-08" db="EMBL/GenBank/DDBJ databases">
        <title>Complete sequence of Shewanella sediminis HAW-EB3.</title>
        <authorList>
            <consortium name="US DOE Joint Genome Institute"/>
            <person name="Copeland A."/>
            <person name="Lucas S."/>
            <person name="Lapidus A."/>
            <person name="Barry K."/>
            <person name="Glavina del Rio T."/>
            <person name="Dalin E."/>
            <person name="Tice H."/>
            <person name="Pitluck S."/>
            <person name="Chertkov O."/>
            <person name="Brettin T."/>
            <person name="Bruce D."/>
            <person name="Detter J.C."/>
            <person name="Han C."/>
            <person name="Schmutz J."/>
            <person name="Larimer F."/>
            <person name="Land M."/>
            <person name="Hauser L."/>
            <person name="Kyrpides N."/>
            <person name="Kim E."/>
            <person name="Zhao J.-S."/>
            <person name="Richardson P."/>
        </authorList>
    </citation>
    <scope>NUCLEOTIDE SEQUENCE [LARGE SCALE GENOMIC DNA]</scope>
    <source>
        <strain>HAW-EB3</strain>
    </source>
</reference>
<name>TDH_SHESH</name>
<comment type="function">
    <text evidence="1">Catalyzes the NAD(+)-dependent oxidation of L-threonine to 2-amino-3-ketobutyrate.</text>
</comment>
<comment type="catalytic activity">
    <reaction evidence="1">
        <text>L-threonine + NAD(+) = (2S)-2-amino-3-oxobutanoate + NADH + H(+)</text>
        <dbReference type="Rhea" id="RHEA:13161"/>
        <dbReference type="ChEBI" id="CHEBI:15378"/>
        <dbReference type="ChEBI" id="CHEBI:57540"/>
        <dbReference type="ChEBI" id="CHEBI:57926"/>
        <dbReference type="ChEBI" id="CHEBI:57945"/>
        <dbReference type="ChEBI" id="CHEBI:78948"/>
        <dbReference type="EC" id="1.1.1.103"/>
    </reaction>
</comment>
<comment type="cofactor">
    <cofactor evidence="1">
        <name>Zn(2+)</name>
        <dbReference type="ChEBI" id="CHEBI:29105"/>
    </cofactor>
    <text evidence="1">Binds 2 Zn(2+) ions per subunit.</text>
</comment>
<comment type="pathway">
    <text evidence="1">Amino-acid degradation; L-threonine degradation via oxydo-reductase pathway; glycine from L-threonine: step 1/2.</text>
</comment>
<comment type="subunit">
    <text evidence="1">Homotetramer.</text>
</comment>
<comment type="subcellular location">
    <subcellularLocation>
        <location evidence="1">Cytoplasm</location>
    </subcellularLocation>
</comment>
<comment type="similarity">
    <text evidence="1">Belongs to the zinc-containing alcohol dehydrogenase family.</text>
</comment>
<evidence type="ECO:0000255" key="1">
    <source>
        <dbReference type="HAMAP-Rule" id="MF_00627"/>
    </source>
</evidence>
<accession>A8FPE0</accession>
<keyword id="KW-0963">Cytoplasm</keyword>
<keyword id="KW-0479">Metal-binding</keyword>
<keyword id="KW-0520">NAD</keyword>
<keyword id="KW-0560">Oxidoreductase</keyword>
<keyword id="KW-1185">Reference proteome</keyword>
<keyword id="KW-0862">Zinc</keyword>
<feature type="chain" id="PRO_1000082618" description="L-threonine 3-dehydrogenase">
    <location>
        <begin position="1"/>
        <end position="341"/>
    </location>
</feature>
<feature type="active site" description="Charge relay system" evidence="1">
    <location>
        <position position="40"/>
    </location>
</feature>
<feature type="active site" description="Charge relay system" evidence="1">
    <location>
        <position position="43"/>
    </location>
</feature>
<feature type="binding site" evidence="1">
    <location>
        <position position="38"/>
    </location>
    <ligand>
        <name>Zn(2+)</name>
        <dbReference type="ChEBI" id="CHEBI:29105"/>
        <label>1</label>
        <note>catalytic</note>
    </ligand>
</feature>
<feature type="binding site" evidence="1">
    <location>
        <position position="63"/>
    </location>
    <ligand>
        <name>Zn(2+)</name>
        <dbReference type="ChEBI" id="CHEBI:29105"/>
        <label>1</label>
        <note>catalytic</note>
    </ligand>
</feature>
<feature type="binding site" evidence="1">
    <location>
        <position position="64"/>
    </location>
    <ligand>
        <name>Zn(2+)</name>
        <dbReference type="ChEBI" id="CHEBI:29105"/>
        <label>1</label>
        <note>catalytic</note>
    </ligand>
</feature>
<feature type="binding site" evidence="1">
    <location>
        <position position="93"/>
    </location>
    <ligand>
        <name>Zn(2+)</name>
        <dbReference type="ChEBI" id="CHEBI:29105"/>
        <label>2</label>
    </ligand>
</feature>
<feature type="binding site" evidence="1">
    <location>
        <position position="96"/>
    </location>
    <ligand>
        <name>Zn(2+)</name>
        <dbReference type="ChEBI" id="CHEBI:29105"/>
        <label>2</label>
    </ligand>
</feature>
<feature type="binding site" evidence="1">
    <location>
        <position position="99"/>
    </location>
    <ligand>
        <name>Zn(2+)</name>
        <dbReference type="ChEBI" id="CHEBI:29105"/>
        <label>2</label>
    </ligand>
</feature>
<feature type="binding site" evidence="1">
    <location>
        <position position="107"/>
    </location>
    <ligand>
        <name>Zn(2+)</name>
        <dbReference type="ChEBI" id="CHEBI:29105"/>
        <label>2</label>
    </ligand>
</feature>
<feature type="binding site" evidence="1">
    <location>
        <position position="175"/>
    </location>
    <ligand>
        <name>NAD(+)</name>
        <dbReference type="ChEBI" id="CHEBI:57540"/>
    </ligand>
</feature>
<feature type="binding site" evidence="1">
    <location>
        <position position="195"/>
    </location>
    <ligand>
        <name>NAD(+)</name>
        <dbReference type="ChEBI" id="CHEBI:57540"/>
    </ligand>
</feature>
<feature type="binding site" evidence="1">
    <location>
        <position position="200"/>
    </location>
    <ligand>
        <name>NAD(+)</name>
        <dbReference type="ChEBI" id="CHEBI:57540"/>
    </ligand>
</feature>
<feature type="binding site" evidence="1">
    <location>
        <begin position="262"/>
        <end position="264"/>
    </location>
    <ligand>
        <name>NAD(+)</name>
        <dbReference type="ChEBI" id="CHEBI:57540"/>
    </ligand>
</feature>
<feature type="binding site" evidence="1">
    <location>
        <begin position="286"/>
        <end position="287"/>
    </location>
    <ligand>
        <name>NAD(+)</name>
        <dbReference type="ChEBI" id="CHEBI:57540"/>
    </ligand>
</feature>
<feature type="site" description="Important for catalytic activity for the proton relay mechanism but does not participate directly in the coordination of zinc atom" evidence="1">
    <location>
        <position position="148"/>
    </location>
</feature>
<protein>
    <recommendedName>
        <fullName evidence="1">L-threonine 3-dehydrogenase</fullName>
        <shortName evidence="1">TDH</shortName>
        <ecNumber evidence="1">1.1.1.103</ecNumber>
    </recommendedName>
</protein>
<sequence length="341" mass="37266">MKALSKLKPEEGIWMVDAPKPEMGHNDLLIKIRKTAICGTDIHIYNWDEWSQKTIPVPMVVGHEYVGEVIDMGIEVRGFDVGDRVSGEGHITCGHCRNCRGGRTHLCRNTSGVGVNRDGAFAEYLVIPAFNAFKIPDDISDDLASIFDPFGNAVHTALSFDLVGEDVLITGAGPIGIMAAAVCRHVGARHVVITDVNEYRLELANKMGATRAVNVAKESLEGVMEELGMTEGFDVGLEMSGVPSAFHSMLDTMNHGGKIAMLGIPGGEMAIDWSKVIFKGLILKGIYGREMFETWYKMASLIQSGLDISPIITHHFKIDDFQQGFDAMRSGQSGKVILNWD</sequence>
<organism>
    <name type="scientific">Shewanella sediminis (strain HAW-EB3)</name>
    <dbReference type="NCBI Taxonomy" id="425104"/>
    <lineage>
        <taxon>Bacteria</taxon>
        <taxon>Pseudomonadati</taxon>
        <taxon>Pseudomonadota</taxon>
        <taxon>Gammaproteobacteria</taxon>
        <taxon>Alteromonadales</taxon>
        <taxon>Shewanellaceae</taxon>
        <taxon>Shewanella</taxon>
    </lineage>
</organism>